<dbReference type="EMBL" id="CP000436">
    <property type="protein sequence ID" value="ABI24363.1"/>
    <property type="molecule type" value="Genomic_DNA"/>
</dbReference>
<dbReference type="SMR" id="Q0I139"/>
<dbReference type="KEGG" id="hso:HS_0082"/>
<dbReference type="eggNOG" id="COG0100">
    <property type="taxonomic scope" value="Bacteria"/>
</dbReference>
<dbReference type="HOGENOM" id="CLU_072439_5_0_6"/>
<dbReference type="GO" id="GO:1990904">
    <property type="term" value="C:ribonucleoprotein complex"/>
    <property type="evidence" value="ECO:0007669"/>
    <property type="project" value="UniProtKB-KW"/>
</dbReference>
<dbReference type="GO" id="GO:0005840">
    <property type="term" value="C:ribosome"/>
    <property type="evidence" value="ECO:0007669"/>
    <property type="project" value="UniProtKB-KW"/>
</dbReference>
<dbReference type="GO" id="GO:0019843">
    <property type="term" value="F:rRNA binding"/>
    <property type="evidence" value="ECO:0007669"/>
    <property type="project" value="UniProtKB-UniRule"/>
</dbReference>
<dbReference type="GO" id="GO:0003735">
    <property type="term" value="F:structural constituent of ribosome"/>
    <property type="evidence" value="ECO:0007669"/>
    <property type="project" value="InterPro"/>
</dbReference>
<dbReference type="GO" id="GO:0006412">
    <property type="term" value="P:translation"/>
    <property type="evidence" value="ECO:0007669"/>
    <property type="project" value="UniProtKB-UniRule"/>
</dbReference>
<dbReference type="FunFam" id="3.30.420.80:FF:000001">
    <property type="entry name" value="30S ribosomal protein S11"/>
    <property type="match status" value="1"/>
</dbReference>
<dbReference type="Gene3D" id="3.30.420.80">
    <property type="entry name" value="Ribosomal protein S11"/>
    <property type="match status" value="1"/>
</dbReference>
<dbReference type="HAMAP" id="MF_01310">
    <property type="entry name" value="Ribosomal_uS11"/>
    <property type="match status" value="1"/>
</dbReference>
<dbReference type="InterPro" id="IPR001971">
    <property type="entry name" value="Ribosomal_uS11"/>
</dbReference>
<dbReference type="InterPro" id="IPR019981">
    <property type="entry name" value="Ribosomal_uS11_bac-type"/>
</dbReference>
<dbReference type="InterPro" id="IPR018102">
    <property type="entry name" value="Ribosomal_uS11_CS"/>
</dbReference>
<dbReference type="InterPro" id="IPR036967">
    <property type="entry name" value="Ribosomal_uS11_sf"/>
</dbReference>
<dbReference type="NCBIfam" id="NF003698">
    <property type="entry name" value="PRK05309.1"/>
    <property type="match status" value="1"/>
</dbReference>
<dbReference type="NCBIfam" id="TIGR03632">
    <property type="entry name" value="uS11_bact"/>
    <property type="match status" value="1"/>
</dbReference>
<dbReference type="PANTHER" id="PTHR11759">
    <property type="entry name" value="40S RIBOSOMAL PROTEIN S14/30S RIBOSOMAL PROTEIN S11"/>
    <property type="match status" value="1"/>
</dbReference>
<dbReference type="Pfam" id="PF00411">
    <property type="entry name" value="Ribosomal_S11"/>
    <property type="match status" value="1"/>
</dbReference>
<dbReference type="PIRSF" id="PIRSF002131">
    <property type="entry name" value="Ribosomal_S11"/>
    <property type="match status" value="1"/>
</dbReference>
<dbReference type="SUPFAM" id="SSF53137">
    <property type="entry name" value="Translational machinery components"/>
    <property type="match status" value="1"/>
</dbReference>
<dbReference type="PROSITE" id="PS00054">
    <property type="entry name" value="RIBOSOMAL_S11"/>
    <property type="match status" value="1"/>
</dbReference>
<name>RS11_HISS1</name>
<comment type="function">
    <text evidence="1">Located on the platform of the 30S subunit, it bridges several disparate RNA helices of the 16S rRNA. Forms part of the Shine-Dalgarno cleft in the 70S ribosome.</text>
</comment>
<comment type="subunit">
    <text evidence="1">Part of the 30S ribosomal subunit. Interacts with proteins S7 and S18. Binds to IF-3.</text>
</comment>
<comment type="similarity">
    <text evidence="1">Belongs to the universal ribosomal protein uS11 family.</text>
</comment>
<accession>Q0I139</accession>
<evidence type="ECO:0000255" key="1">
    <source>
        <dbReference type="HAMAP-Rule" id="MF_01310"/>
    </source>
</evidence>
<evidence type="ECO:0000305" key="2"/>
<sequence length="129" mass="13915">MAKTPVRTRKRVKKQVVDGVAHIHASFNNTIVTITDRQGNALAWATAGGSGFRGSRKSTPFAAQVAAERCAEVVKEFGLKNLEVMVKGPGPGRESTIRALNAAGFRITNITDVTPIPHNGCRPPKKRRV</sequence>
<protein>
    <recommendedName>
        <fullName evidence="1">Small ribosomal subunit protein uS11</fullName>
    </recommendedName>
    <alternativeName>
        <fullName evidence="2">30S ribosomal protein S11</fullName>
    </alternativeName>
</protein>
<keyword id="KW-0687">Ribonucleoprotein</keyword>
<keyword id="KW-0689">Ribosomal protein</keyword>
<keyword id="KW-0694">RNA-binding</keyword>
<keyword id="KW-0699">rRNA-binding</keyword>
<organism>
    <name type="scientific">Histophilus somni (strain 129Pt)</name>
    <name type="common">Haemophilus somnus</name>
    <dbReference type="NCBI Taxonomy" id="205914"/>
    <lineage>
        <taxon>Bacteria</taxon>
        <taxon>Pseudomonadati</taxon>
        <taxon>Pseudomonadota</taxon>
        <taxon>Gammaproteobacteria</taxon>
        <taxon>Pasteurellales</taxon>
        <taxon>Pasteurellaceae</taxon>
        <taxon>Histophilus</taxon>
    </lineage>
</organism>
<gene>
    <name evidence="1" type="primary">rpsK</name>
    <name type="ordered locus">HS_0082</name>
</gene>
<proteinExistence type="inferred from homology"/>
<reference key="1">
    <citation type="journal article" date="2007" name="J. Bacteriol.">
        <title>Complete genome sequence of Haemophilus somnus (Histophilus somni) strain 129Pt and comparison to Haemophilus ducreyi 35000HP and Haemophilus influenzae Rd.</title>
        <authorList>
            <person name="Challacombe J.F."/>
            <person name="Duncan A.J."/>
            <person name="Brettin T.S."/>
            <person name="Bruce D."/>
            <person name="Chertkov O."/>
            <person name="Detter J.C."/>
            <person name="Han C.S."/>
            <person name="Misra M."/>
            <person name="Richardson P."/>
            <person name="Tapia R."/>
            <person name="Thayer N."/>
            <person name="Xie G."/>
            <person name="Inzana T.J."/>
        </authorList>
    </citation>
    <scope>NUCLEOTIDE SEQUENCE [LARGE SCALE GENOMIC DNA]</scope>
    <source>
        <strain>129Pt</strain>
    </source>
</reference>
<feature type="chain" id="PRO_0000294766" description="Small ribosomal subunit protein uS11">
    <location>
        <begin position="1"/>
        <end position="129"/>
    </location>
</feature>